<dbReference type="EMBL" id="DQ119058">
    <property type="protein sequence ID" value="AAZ94645.1"/>
    <property type="molecule type" value="Genomic_DNA"/>
</dbReference>
<dbReference type="EMBL" id="AJ970307">
    <property type="protein sequence ID" value="CAJ00752.1"/>
    <property type="molecule type" value="Genomic_DNA"/>
</dbReference>
<dbReference type="EMBL" id="DQ865975">
    <property type="protein sequence ID" value="ABI97411.1"/>
    <property type="molecule type" value="Genomic_DNA"/>
</dbReference>
<dbReference type="EMBL" id="DQ865976">
    <property type="protein sequence ID" value="ABI98740.1"/>
    <property type="molecule type" value="Genomic_DNA"/>
</dbReference>
<dbReference type="RefSeq" id="YP_247593.1">
    <property type="nucleotide sequence ID" value="NC_007144.1"/>
</dbReference>
<dbReference type="SMR" id="Q4VZN9"/>
<dbReference type="GeneID" id="3429286"/>
<dbReference type="KEGG" id="csv:3429286"/>
<dbReference type="OrthoDB" id="564131at2759"/>
<dbReference type="GO" id="GO:0009535">
    <property type="term" value="C:chloroplast thylakoid membrane"/>
    <property type="evidence" value="ECO:0007669"/>
    <property type="project" value="UniProtKB-SubCell"/>
</dbReference>
<dbReference type="GO" id="GO:0009523">
    <property type="term" value="C:photosystem II"/>
    <property type="evidence" value="ECO:0007669"/>
    <property type="project" value="UniProtKB-KW"/>
</dbReference>
<dbReference type="GO" id="GO:0019684">
    <property type="term" value="P:photosynthesis, light reaction"/>
    <property type="evidence" value="ECO:0007669"/>
    <property type="project" value="InterPro"/>
</dbReference>
<dbReference type="HAMAP" id="MF_00438">
    <property type="entry name" value="PSII_PsbM"/>
    <property type="match status" value="1"/>
</dbReference>
<dbReference type="InterPro" id="IPR007826">
    <property type="entry name" value="PSII_PsbM"/>
</dbReference>
<dbReference type="InterPro" id="IPR037269">
    <property type="entry name" value="PSII_PsbM_sf"/>
</dbReference>
<dbReference type="NCBIfam" id="TIGR03038">
    <property type="entry name" value="PS_II_psbM"/>
    <property type="match status" value="1"/>
</dbReference>
<dbReference type="PANTHER" id="PTHR35774">
    <property type="entry name" value="PHOTOSYSTEM II REACTION CENTER PROTEIN M"/>
    <property type="match status" value="1"/>
</dbReference>
<dbReference type="PANTHER" id="PTHR35774:SF1">
    <property type="entry name" value="PHOTOSYSTEM II REACTION CENTER PROTEIN M"/>
    <property type="match status" value="1"/>
</dbReference>
<dbReference type="Pfam" id="PF05151">
    <property type="entry name" value="PsbM"/>
    <property type="match status" value="1"/>
</dbReference>
<dbReference type="SUPFAM" id="SSF161033">
    <property type="entry name" value="Photosystem II reaction center protein M, PsbM"/>
    <property type="match status" value="1"/>
</dbReference>
<sequence length="34" mass="3770">MEVNILAFIATALFILVPTAFLLIIYVKTISQSD</sequence>
<organism>
    <name type="scientific">Cucumis sativus</name>
    <name type="common">Cucumber</name>
    <dbReference type="NCBI Taxonomy" id="3659"/>
    <lineage>
        <taxon>Eukaryota</taxon>
        <taxon>Viridiplantae</taxon>
        <taxon>Streptophyta</taxon>
        <taxon>Embryophyta</taxon>
        <taxon>Tracheophyta</taxon>
        <taxon>Spermatophyta</taxon>
        <taxon>Magnoliopsida</taxon>
        <taxon>eudicotyledons</taxon>
        <taxon>Gunneridae</taxon>
        <taxon>Pentapetalae</taxon>
        <taxon>rosids</taxon>
        <taxon>fabids</taxon>
        <taxon>Cucurbitales</taxon>
        <taxon>Cucurbitaceae</taxon>
        <taxon>Benincaseae</taxon>
        <taxon>Cucumis</taxon>
    </lineage>
</organism>
<comment type="function">
    <text evidence="1">One of the components of the core complex of photosystem II (PSII). PSII is a light-driven water:plastoquinone oxidoreductase that uses light energy to abstract electrons from H(2)O, generating O(2) and a proton gradient subsequently used for ATP formation. It consists of a core antenna complex that captures photons, and an electron transfer chain that converts photonic excitation into a charge separation. This subunit is found at the monomer-monomer interface.</text>
</comment>
<comment type="subunit">
    <text evidence="1">PSII is composed of 1 copy each of membrane proteins PsbA, PsbB, PsbC, PsbD, PsbE, PsbF, PsbH, PsbI, PsbJ, PsbK, PsbL, PsbM, PsbT, PsbX, PsbY, PsbZ, Psb30/Ycf12, at least 3 peripheral proteins of the oxygen-evolving complex and a large number of cofactors. It forms dimeric complexes.</text>
</comment>
<comment type="subcellular location">
    <subcellularLocation>
        <location evidence="1">Plastid</location>
        <location evidence="1">Chloroplast thylakoid membrane</location>
        <topology evidence="1">Single-pass membrane protein</topology>
    </subcellularLocation>
</comment>
<comment type="similarity">
    <text evidence="1">Belongs to the PsbM family.</text>
</comment>
<protein>
    <recommendedName>
        <fullName evidence="1">Photosystem II reaction center protein M</fullName>
        <shortName evidence="1">PSII-M</shortName>
    </recommendedName>
</protein>
<name>PSBM_CUCSA</name>
<geneLocation type="chloroplast"/>
<feature type="chain" id="PRO_0000276235" description="Photosystem II reaction center protein M">
    <location>
        <begin position="1"/>
        <end position="34"/>
    </location>
</feature>
<feature type="transmembrane region" description="Helical" evidence="1">
    <location>
        <begin position="5"/>
        <end position="25"/>
    </location>
</feature>
<reference key="1">
    <citation type="journal article" date="2006" name="Plant Cell Rep.">
        <title>Complete sequence and organization of the cucumber (Cucumis sativus L. cv. Baekmibaekdadagi) chloroplast genome.</title>
        <authorList>
            <person name="Kim J.-S."/>
            <person name="Jung J.D."/>
            <person name="Lee J.-A."/>
            <person name="Park H.-W."/>
            <person name="Oh K.-H."/>
            <person name="Jeong W.J."/>
            <person name="Choi D.-W."/>
            <person name="Liu J.R."/>
            <person name="Cho K.Y."/>
        </authorList>
    </citation>
    <scope>NUCLEOTIDE SEQUENCE [LARGE SCALE GENOMIC DNA]</scope>
    <source>
        <strain>cv. Baekmibaekdadagi</strain>
    </source>
</reference>
<reference key="2">
    <citation type="journal article" date="2007" name="Cell. Mol. Biol. Lett.">
        <title>The complete structure of the cucumber (Cucumis sativus L.) chloroplast genome: its composition and comparative analysis.</title>
        <authorList>
            <person name="Plader W.W."/>
            <person name="Yukawa Y."/>
            <person name="Sugiura M."/>
            <person name="Malepszy S."/>
        </authorList>
    </citation>
    <scope>NUCLEOTIDE SEQUENCE [LARGE SCALE GENOMIC DNA]</scope>
    <source>
        <strain>cv. Borszczagowski</strain>
    </source>
</reference>
<reference key="3">
    <citation type="journal article" date="2007" name="Genome">
        <title>Sequencing cucumber (Cucumis sativus L.) chloroplast genomes identifies differences between chilling-tolerant and -susceptible cucumber lines.</title>
        <authorList>
            <person name="Chung S.-M."/>
            <person name="Gordon V.S."/>
            <person name="Staub J.E."/>
        </authorList>
    </citation>
    <scope>NUCLEOTIDE SEQUENCE [LARGE SCALE GENOMIC DNA]</scope>
    <source>
        <strain>cv. Chipper</strain>
        <strain>cv. Gy14</strain>
    </source>
</reference>
<keyword id="KW-0150">Chloroplast</keyword>
<keyword id="KW-0472">Membrane</keyword>
<keyword id="KW-0602">Photosynthesis</keyword>
<keyword id="KW-0604">Photosystem II</keyword>
<keyword id="KW-0934">Plastid</keyword>
<keyword id="KW-0674">Reaction center</keyword>
<keyword id="KW-0793">Thylakoid</keyword>
<keyword id="KW-0812">Transmembrane</keyword>
<keyword id="KW-1133">Transmembrane helix</keyword>
<evidence type="ECO:0000255" key="1">
    <source>
        <dbReference type="HAMAP-Rule" id="MF_00438"/>
    </source>
</evidence>
<accession>Q4VZN9</accession>
<accession>A5J1S8</accession>
<gene>
    <name evidence="1" type="primary">psbM</name>
    <name type="ordered locus">CsCp021</name>
</gene>
<proteinExistence type="inferred from homology"/>